<proteinExistence type="inferred from homology"/>
<sequence length="444" mass="49188">MSQSYINVIGAGLAGSEAAYQIAERGIPVKLYEMRGVKSTPQHKTDNFAELVCSNSLRGDALTNAVGLLKEEMRRLGSVILESAEATRVPAGGALAVDRDGFSQMVTEKVANHPLIEVVRDEITELPTDVITVIATGPLTSDALAEKIHALNDGAGFYFYDAAAPIIDVNTIDMSKVYLKSRYDKGEAAYLNAPMTKQEFMDFHEALVNAEEAPLSSFEKEKYFEGCMPIEVMAKRGIKTMLYGPMKPVGLEYPDDYTGPRDGEFKTPYAVVQLRQDNAAGSLYNIVGFQTHLKWGEQKRVFQMIPGLENAEFVRYGVMHRNSYMDSPNLLEQTYRSKKQPNLFFAGQMTGVEGYVESAASGLVAGINAARLFKEESEAIFPETTAIGSLAHYITHADSKHFQPMNVNFGIIKELEGERIRDKKARYEKIAERALADLEEFLTV</sequence>
<name>TRMFO_STRPN</name>
<evidence type="ECO:0000255" key="1">
    <source>
        <dbReference type="HAMAP-Rule" id="MF_01037"/>
    </source>
</evidence>
<evidence type="ECO:0000305" key="2"/>
<accession>Q97R84</accession>
<dbReference type="EC" id="2.1.1.74" evidence="1"/>
<dbReference type="EMBL" id="AE005672">
    <property type="protein sequence ID" value="AAK75066.1"/>
    <property type="status" value="ALT_INIT"/>
    <property type="molecule type" value="Genomic_DNA"/>
</dbReference>
<dbReference type="PIR" id="A95109">
    <property type="entry name" value="A95109"/>
</dbReference>
<dbReference type="RefSeq" id="WP_000083696.1">
    <property type="nucleotide sequence ID" value="NZ_CP155539.1"/>
</dbReference>
<dbReference type="SMR" id="Q97R84"/>
<dbReference type="PaxDb" id="170187-SP_0943"/>
<dbReference type="EnsemblBacteria" id="AAK75066">
    <property type="protein sequence ID" value="AAK75066"/>
    <property type="gene ID" value="SP_0943"/>
</dbReference>
<dbReference type="KEGG" id="spn:SP_0943"/>
<dbReference type="eggNOG" id="COG1206">
    <property type="taxonomic scope" value="Bacteria"/>
</dbReference>
<dbReference type="PhylomeDB" id="Q97R84"/>
<dbReference type="Proteomes" id="UP000000585">
    <property type="component" value="Chromosome"/>
</dbReference>
<dbReference type="GO" id="GO:0005829">
    <property type="term" value="C:cytosol"/>
    <property type="evidence" value="ECO:0007669"/>
    <property type="project" value="TreeGrafter"/>
</dbReference>
<dbReference type="GO" id="GO:0050660">
    <property type="term" value="F:flavin adenine dinucleotide binding"/>
    <property type="evidence" value="ECO:0007669"/>
    <property type="project" value="UniProtKB-UniRule"/>
</dbReference>
<dbReference type="GO" id="GO:0047151">
    <property type="term" value="F:tRNA (uracil(54)-C5)-methyltransferase activity, 5,10-methylenetetrahydrofolate-dependent"/>
    <property type="evidence" value="ECO:0007669"/>
    <property type="project" value="UniProtKB-UniRule"/>
</dbReference>
<dbReference type="GO" id="GO:0030488">
    <property type="term" value="P:tRNA methylation"/>
    <property type="evidence" value="ECO:0007669"/>
    <property type="project" value="TreeGrafter"/>
</dbReference>
<dbReference type="GO" id="GO:0002098">
    <property type="term" value="P:tRNA wobble uridine modification"/>
    <property type="evidence" value="ECO:0007669"/>
    <property type="project" value="TreeGrafter"/>
</dbReference>
<dbReference type="FunFam" id="3.50.50.60:FF:000035">
    <property type="entry name" value="Methylenetetrahydrofolate--tRNA-(uracil-5-)-methyltransferase TrmFO"/>
    <property type="match status" value="1"/>
</dbReference>
<dbReference type="FunFam" id="3.50.50.60:FF:000040">
    <property type="entry name" value="Methylenetetrahydrofolate--tRNA-(uracil-5-)-methyltransferase TrmFO"/>
    <property type="match status" value="1"/>
</dbReference>
<dbReference type="Gene3D" id="3.50.50.60">
    <property type="entry name" value="FAD/NAD(P)-binding domain"/>
    <property type="match status" value="2"/>
</dbReference>
<dbReference type="HAMAP" id="MF_01037">
    <property type="entry name" value="TrmFO"/>
    <property type="match status" value="1"/>
</dbReference>
<dbReference type="InterPro" id="IPR036188">
    <property type="entry name" value="FAD/NAD-bd_sf"/>
</dbReference>
<dbReference type="InterPro" id="IPR002218">
    <property type="entry name" value="MnmG-rel"/>
</dbReference>
<dbReference type="InterPro" id="IPR020595">
    <property type="entry name" value="MnmG-rel_CS"/>
</dbReference>
<dbReference type="InterPro" id="IPR040131">
    <property type="entry name" value="MnmG_N"/>
</dbReference>
<dbReference type="InterPro" id="IPR004417">
    <property type="entry name" value="TrmFO"/>
</dbReference>
<dbReference type="NCBIfam" id="TIGR00137">
    <property type="entry name" value="gid_trmFO"/>
    <property type="match status" value="1"/>
</dbReference>
<dbReference type="NCBIfam" id="NF003739">
    <property type="entry name" value="PRK05335.1"/>
    <property type="match status" value="1"/>
</dbReference>
<dbReference type="PANTHER" id="PTHR11806">
    <property type="entry name" value="GLUCOSE INHIBITED DIVISION PROTEIN A"/>
    <property type="match status" value="1"/>
</dbReference>
<dbReference type="PANTHER" id="PTHR11806:SF2">
    <property type="entry name" value="METHYLENETETRAHYDROFOLATE--TRNA-(URACIL-5-)-METHYLTRANSFERASE TRMFO"/>
    <property type="match status" value="1"/>
</dbReference>
<dbReference type="Pfam" id="PF01134">
    <property type="entry name" value="GIDA"/>
    <property type="match status" value="1"/>
</dbReference>
<dbReference type="SUPFAM" id="SSF51905">
    <property type="entry name" value="FAD/NAD(P)-binding domain"/>
    <property type="match status" value="1"/>
</dbReference>
<dbReference type="PROSITE" id="PS01281">
    <property type="entry name" value="GIDA_2"/>
    <property type="match status" value="1"/>
</dbReference>
<keyword id="KW-0963">Cytoplasm</keyword>
<keyword id="KW-0274">FAD</keyword>
<keyword id="KW-0285">Flavoprotein</keyword>
<keyword id="KW-0489">Methyltransferase</keyword>
<keyword id="KW-0520">NAD</keyword>
<keyword id="KW-0521">NADP</keyword>
<keyword id="KW-1185">Reference proteome</keyword>
<keyword id="KW-0808">Transferase</keyword>
<keyword id="KW-0819">tRNA processing</keyword>
<organism>
    <name type="scientific">Streptococcus pneumoniae serotype 4 (strain ATCC BAA-334 / TIGR4)</name>
    <dbReference type="NCBI Taxonomy" id="170187"/>
    <lineage>
        <taxon>Bacteria</taxon>
        <taxon>Bacillati</taxon>
        <taxon>Bacillota</taxon>
        <taxon>Bacilli</taxon>
        <taxon>Lactobacillales</taxon>
        <taxon>Streptococcaceae</taxon>
        <taxon>Streptococcus</taxon>
    </lineage>
</organism>
<protein>
    <recommendedName>
        <fullName evidence="1">Methylenetetrahydrofolate--tRNA-(uracil-5-)-methyltransferase TrmFO</fullName>
        <ecNumber evidence="1">2.1.1.74</ecNumber>
    </recommendedName>
    <alternativeName>
        <fullName evidence="1">Folate-dependent tRNA (uracil-5-)-methyltransferase</fullName>
    </alternativeName>
    <alternativeName>
        <fullName evidence="1">Folate-dependent tRNA(M-5-U54)-methyltransferase</fullName>
    </alternativeName>
</protein>
<reference key="1">
    <citation type="journal article" date="2001" name="Science">
        <title>Complete genome sequence of a virulent isolate of Streptococcus pneumoniae.</title>
        <authorList>
            <person name="Tettelin H."/>
            <person name="Nelson K.E."/>
            <person name="Paulsen I.T."/>
            <person name="Eisen J.A."/>
            <person name="Read T.D."/>
            <person name="Peterson S.N."/>
            <person name="Heidelberg J.F."/>
            <person name="DeBoy R.T."/>
            <person name="Haft D.H."/>
            <person name="Dodson R.J."/>
            <person name="Durkin A.S."/>
            <person name="Gwinn M.L."/>
            <person name="Kolonay J.F."/>
            <person name="Nelson W.C."/>
            <person name="Peterson J.D."/>
            <person name="Umayam L.A."/>
            <person name="White O."/>
            <person name="Salzberg S.L."/>
            <person name="Lewis M.R."/>
            <person name="Radune D."/>
            <person name="Holtzapple E.K."/>
            <person name="Khouri H.M."/>
            <person name="Wolf A.M."/>
            <person name="Utterback T.R."/>
            <person name="Hansen C.L."/>
            <person name="McDonald L.A."/>
            <person name="Feldblyum T.V."/>
            <person name="Angiuoli S.V."/>
            <person name="Dickinson T."/>
            <person name="Hickey E.K."/>
            <person name="Holt I.E."/>
            <person name="Loftus B.J."/>
            <person name="Yang F."/>
            <person name="Smith H.O."/>
            <person name="Venter J.C."/>
            <person name="Dougherty B.A."/>
            <person name="Morrison D.A."/>
            <person name="Hollingshead S.K."/>
            <person name="Fraser C.M."/>
        </authorList>
    </citation>
    <scope>NUCLEOTIDE SEQUENCE [LARGE SCALE GENOMIC DNA]</scope>
    <source>
        <strain>ATCC BAA-334 / TIGR4</strain>
    </source>
</reference>
<gene>
    <name evidence="1" type="primary">trmFO</name>
    <name type="synonym">gid</name>
    <name type="ordered locus">SP_0943</name>
</gene>
<feature type="chain" id="PRO_0000117272" description="Methylenetetrahydrofolate--tRNA-(uracil-5-)-methyltransferase TrmFO">
    <location>
        <begin position="1"/>
        <end position="444"/>
    </location>
</feature>
<feature type="binding site" evidence="1">
    <location>
        <begin position="10"/>
        <end position="15"/>
    </location>
    <ligand>
        <name>FAD</name>
        <dbReference type="ChEBI" id="CHEBI:57692"/>
    </ligand>
</feature>
<comment type="function">
    <text evidence="1">Catalyzes the folate-dependent formation of 5-methyl-uridine at position 54 (M-5-U54) in all tRNAs.</text>
</comment>
<comment type="catalytic activity">
    <reaction evidence="1">
        <text>uridine(54) in tRNA + (6R)-5,10-methylene-5,6,7,8-tetrahydrofolate + NADH + H(+) = 5-methyluridine(54) in tRNA + (6S)-5,6,7,8-tetrahydrofolate + NAD(+)</text>
        <dbReference type="Rhea" id="RHEA:16873"/>
        <dbReference type="Rhea" id="RHEA-COMP:10167"/>
        <dbReference type="Rhea" id="RHEA-COMP:10193"/>
        <dbReference type="ChEBI" id="CHEBI:15378"/>
        <dbReference type="ChEBI" id="CHEBI:15636"/>
        <dbReference type="ChEBI" id="CHEBI:57453"/>
        <dbReference type="ChEBI" id="CHEBI:57540"/>
        <dbReference type="ChEBI" id="CHEBI:57945"/>
        <dbReference type="ChEBI" id="CHEBI:65315"/>
        <dbReference type="ChEBI" id="CHEBI:74447"/>
        <dbReference type="EC" id="2.1.1.74"/>
    </reaction>
</comment>
<comment type="catalytic activity">
    <reaction evidence="1">
        <text>uridine(54) in tRNA + (6R)-5,10-methylene-5,6,7,8-tetrahydrofolate + NADPH + H(+) = 5-methyluridine(54) in tRNA + (6S)-5,6,7,8-tetrahydrofolate + NADP(+)</text>
        <dbReference type="Rhea" id="RHEA:62372"/>
        <dbReference type="Rhea" id="RHEA-COMP:10167"/>
        <dbReference type="Rhea" id="RHEA-COMP:10193"/>
        <dbReference type="ChEBI" id="CHEBI:15378"/>
        <dbReference type="ChEBI" id="CHEBI:15636"/>
        <dbReference type="ChEBI" id="CHEBI:57453"/>
        <dbReference type="ChEBI" id="CHEBI:57783"/>
        <dbReference type="ChEBI" id="CHEBI:58349"/>
        <dbReference type="ChEBI" id="CHEBI:65315"/>
        <dbReference type="ChEBI" id="CHEBI:74447"/>
        <dbReference type="EC" id="2.1.1.74"/>
    </reaction>
</comment>
<comment type="cofactor">
    <cofactor evidence="1">
        <name>FAD</name>
        <dbReference type="ChEBI" id="CHEBI:57692"/>
    </cofactor>
</comment>
<comment type="subcellular location">
    <subcellularLocation>
        <location evidence="1">Cytoplasm</location>
    </subcellularLocation>
</comment>
<comment type="similarity">
    <text evidence="1">Belongs to the MnmG family. TrmFO subfamily.</text>
</comment>
<comment type="sequence caution" evidence="2">
    <conflict type="erroneous initiation">
        <sequence resource="EMBL-CDS" id="AAK75066"/>
    </conflict>
</comment>